<keyword id="KW-1003">Cell membrane</keyword>
<keyword id="KW-0256">Endoplasmic reticulum</keyword>
<keyword id="KW-0472">Membrane</keyword>
<keyword id="KW-0677">Repeat</keyword>
<keyword id="KW-0812">Transmembrane</keyword>
<keyword id="KW-1133">Transmembrane helix</keyword>
<keyword id="KW-0813">Transport</keyword>
<feature type="chain" id="PRO_0000227681" description="Aquaporin-2">
    <location>
        <begin position="1"/>
        <end position="289"/>
    </location>
</feature>
<feature type="topological domain" description="Cytoplasmic" evidence="1">
    <location>
        <begin position="1"/>
        <end position="47"/>
    </location>
</feature>
<feature type="transmembrane region" description="Helical; Name=1" evidence="2">
    <location>
        <begin position="48"/>
        <end position="68"/>
    </location>
</feature>
<feature type="topological domain" description="Extracellular" evidence="1">
    <location>
        <begin position="69"/>
        <end position="90"/>
    </location>
</feature>
<feature type="transmembrane region" description="Helical; Name=2" evidence="2">
    <location>
        <begin position="91"/>
        <end position="111"/>
    </location>
</feature>
<feature type="topological domain" description="Cytoplasmic" evidence="1">
    <location>
        <begin position="112"/>
        <end position="135"/>
    </location>
</feature>
<feature type="transmembrane region" description="Helical; Name=3" evidence="2">
    <location>
        <begin position="136"/>
        <end position="156"/>
    </location>
</feature>
<feature type="topological domain" description="Extracellular" evidence="1">
    <location>
        <begin position="157"/>
        <end position="175"/>
    </location>
</feature>
<feature type="transmembrane region" description="Helical; Name=4" evidence="2">
    <location>
        <begin position="176"/>
        <end position="196"/>
    </location>
</feature>
<feature type="topological domain" description="Cytoplasmic" evidence="1">
    <location>
        <begin position="197"/>
        <end position="202"/>
    </location>
</feature>
<feature type="transmembrane region" description="Helical; Name=5" evidence="2">
    <location>
        <begin position="203"/>
        <end position="223"/>
    </location>
</feature>
<feature type="topological domain" description="Extracellular" evidence="1">
    <location>
        <begin position="224"/>
        <end position="247"/>
    </location>
</feature>
<feature type="transmembrane region" description="Helical; Name=6" evidence="2">
    <location>
        <begin position="248"/>
        <end position="268"/>
    </location>
</feature>
<feature type="topological domain" description="Cytoplasmic" evidence="1">
    <location>
        <begin position="269"/>
        <end position="289"/>
    </location>
</feature>
<feature type="region of interest" description="Disordered" evidence="3">
    <location>
        <begin position="1"/>
        <end position="36"/>
    </location>
</feature>
<feature type="short sequence motif" description="NPA 1">
    <location>
        <begin position="117"/>
        <end position="119"/>
    </location>
</feature>
<feature type="short sequence motif" description="NPA 2">
    <location>
        <begin position="229"/>
        <end position="231"/>
    </location>
</feature>
<feature type="sequence variant" description="In strain: Chevalieri / ATCC 10604." evidence="4">
    <original>P</original>
    <variation>S</variation>
    <location>
        <position position="141"/>
    </location>
</feature>
<name>AQY2_YEASX</name>
<proteinExistence type="evidence at transcript level"/>
<reference key="1">
    <citation type="journal article" date="2000" name="Yeast">
        <title>Polymorphism of Saccharomyces cerevisiae aquaporins.</title>
        <authorList>
            <person name="Laize V."/>
            <person name="Tacnet F."/>
            <person name="Ripoche P."/>
            <person name="Hohmann S."/>
        </authorList>
    </citation>
    <scope>NUCLEOTIDE SEQUENCE [GENOMIC DNA]</scope>
    <scope>POLYMORPHISM</scope>
    <source>
        <strain>Sigma 1278B</strain>
    </source>
</reference>
<reference key="2">
    <citation type="journal article" date="1998" name="J. Biol. Chem.">
        <title>Aquaporins in Saccharomyces. Genetic and functional distinctions between laboratory and wild-type strains.</title>
        <authorList>
            <person name="Bonhivers M."/>
            <person name="Carbrey J.M."/>
            <person name="Gould S.J."/>
            <person name="Agre P."/>
        </authorList>
    </citation>
    <scope>NUCLEOTIDE SEQUENCE [GENOMIC DNA]</scope>
    <source>
        <strain>Sigma 1278B</strain>
    </source>
</reference>
<reference key="3">
    <citation type="journal article" date="2001" name="Proc. Natl. Acad. Sci. U.S.A.">
        <title>Aquaporins in Saccharomyces: characterization of a second functional water channel protein.</title>
        <authorList>
            <person name="Carbrey J.M."/>
            <person name="Bonhivers M."/>
            <person name="Boeke J.D."/>
            <person name="Agre P."/>
        </authorList>
    </citation>
    <scope>NUCLEOTIDE SEQUENCE [GENOMIC DNA]</scope>
    <scope>VARIANT SER-141</scope>
    <scope>FUNCTION</scope>
    <source>
        <strain>ATCC 10604 / CBS 405 / CECT 11837 / NBRC 0258 / NRRL Y-1546</strain>
    </source>
</reference>
<reference key="4">
    <citation type="journal article" date="2001" name="Eur. J. Biochem.">
        <title>Existence of a tightly regulated water channel in Saccharomyces cerevisiae.</title>
        <authorList>
            <person name="Meyrial V."/>
            <person name="Laize V."/>
            <person name="Gobin R."/>
            <person name="Ripoche P."/>
            <person name="Hohmann S."/>
            <person name="Tacnet F."/>
        </authorList>
    </citation>
    <scope>FUNCTION</scope>
    <scope>SUBCELLULAR LOCATION</scope>
    <scope>INDUCTION</scope>
</reference>
<reference key="5">
    <citation type="journal article" date="2002" name="Appl. Environ. Microbiol.">
        <title>Aquaporin expression correlates with freeze tolerance in baker's yeast, and overexpression improves freeze tolerance in industrial strains.</title>
        <authorList>
            <person name="Tanghe A."/>
            <person name="Van Dijck P."/>
            <person name="Dumortier F."/>
            <person name="Teunissen A."/>
            <person name="Hohmann S."/>
            <person name="Thevelein J.M."/>
        </authorList>
    </citation>
    <scope>FUNCTION</scope>
</reference>
<reference key="6">
    <citation type="journal article" date="2004" name="Appl. Environ. Microbiol.">
        <title>Aquaporin-mediated improvement of freeze tolerance of Saccharomyces cerevisiae is restricted to rapid freezing conditions.</title>
        <authorList>
            <person name="Tanghe A."/>
            <person name="Van Dijck P."/>
            <person name="Colavizza D."/>
            <person name="Thevelein J.M."/>
        </authorList>
    </citation>
    <scope>FUNCTION</scope>
</reference>
<dbReference type="EMBL" id="AF112860">
    <property type="protein sequence ID" value="AAD10058.1"/>
    <property type="molecule type" value="Genomic_DNA"/>
</dbReference>
<dbReference type="EMBL" id="AF056193">
    <property type="protein sequence ID" value="AAD25168.1"/>
    <property type="molecule type" value="Genomic_DNA"/>
</dbReference>
<dbReference type="EMBL" id="AF321111">
    <property type="protein sequence ID" value="AAG53971.1"/>
    <property type="molecule type" value="Genomic_DNA"/>
</dbReference>
<dbReference type="SMR" id="P0CD89"/>
<dbReference type="IntAct" id="P0CD89">
    <property type="interactions" value="1"/>
</dbReference>
<dbReference type="MINT" id="P0CD89"/>
<dbReference type="TCDB" id="1.A.8.6.2">
    <property type="family name" value="the major intrinsic protein (mip) family"/>
</dbReference>
<dbReference type="VEuPathDB" id="FungiDB:YPR192W"/>
<dbReference type="PhylomeDB" id="P0CD89"/>
<dbReference type="GO" id="GO:0005789">
    <property type="term" value="C:endoplasmic reticulum membrane"/>
    <property type="evidence" value="ECO:0007669"/>
    <property type="project" value="UniProtKB-SubCell"/>
</dbReference>
<dbReference type="GO" id="GO:0005886">
    <property type="term" value="C:plasma membrane"/>
    <property type="evidence" value="ECO:0007669"/>
    <property type="project" value="UniProtKB-SubCell"/>
</dbReference>
<dbReference type="GO" id="GO:0015250">
    <property type="term" value="F:water channel activity"/>
    <property type="evidence" value="ECO:0007669"/>
    <property type="project" value="TreeGrafter"/>
</dbReference>
<dbReference type="FunFam" id="1.20.1080.10:FF:000014">
    <property type="entry name" value="Aquaporin 1"/>
    <property type="match status" value="1"/>
</dbReference>
<dbReference type="Gene3D" id="1.20.1080.10">
    <property type="entry name" value="Glycerol uptake facilitator protein"/>
    <property type="match status" value="1"/>
</dbReference>
<dbReference type="InterPro" id="IPR023271">
    <property type="entry name" value="Aquaporin-like"/>
</dbReference>
<dbReference type="InterPro" id="IPR034294">
    <property type="entry name" value="Aquaporin_transptr"/>
</dbReference>
<dbReference type="InterPro" id="IPR000425">
    <property type="entry name" value="MIP"/>
</dbReference>
<dbReference type="InterPro" id="IPR022357">
    <property type="entry name" value="MIP_CS"/>
</dbReference>
<dbReference type="NCBIfam" id="TIGR00861">
    <property type="entry name" value="MIP"/>
    <property type="match status" value="1"/>
</dbReference>
<dbReference type="PANTHER" id="PTHR19139">
    <property type="entry name" value="AQUAPORIN TRANSPORTER"/>
    <property type="match status" value="1"/>
</dbReference>
<dbReference type="PANTHER" id="PTHR19139:SF199">
    <property type="entry name" value="MIP17260P"/>
    <property type="match status" value="1"/>
</dbReference>
<dbReference type="Pfam" id="PF00230">
    <property type="entry name" value="MIP"/>
    <property type="match status" value="1"/>
</dbReference>
<dbReference type="PRINTS" id="PR00783">
    <property type="entry name" value="MINTRINSICP"/>
</dbReference>
<dbReference type="SUPFAM" id="SSF81338">
    <property type="entry name" value="Aquaporin-like"/>
    <property type="match status" value="1"/>
</dbReference>
<dbReference type="PROSITE" id="PS00221">
    <property type="entry name" value="MIP"/>
    <property type="match status" value="1"/>
</dbReference>
<evidence type="ECO:0000250" key="1"/>
<evidence type="ECO:0000255" key="2"/>
<evidence type="ECO:0000256" key="3">
    <source>
        <dbReference type="SAM" id="MobiDB-lite"/>
    </source>
</evidence>
<evidence type="ECO:0000269" key="4">
    <source>
    </source>
</evidence>
<evidence type="ECO:0000269" key="5">
    <source>
    </source>
</evidence>
<evidence type="ECO:0000269" key="6">
    <source>
    </source>
</evidence>
<evidence type="ECO:0000269" key="7">
    <source>
    </source>
</evidence>
<evidence type="ECO:0000305" key="8"/>
<accession>P0CD89</accession>
<accession>O93938</accession>
<accession>Q12258</accession>
<accession>Q12302</accession>
<accession>Q9C411</accession>
<gene>
    <name type="primary">AQY2</name>
    <name type="synonym">AQY2-1</name>
</gene>
<organism>
    <name type="scientific">Saccharomyces cerevisiae</name>
    <name type="common">Baker's yeast</name>
    <dbReference type="NCBI Taxonomy" id="4932"/>
    <lineage>
        <taxon>Eukaryota</taxon>
        <taxon>Fungi</taxon>
        <taxon>Dikarya</taxon>
        <taxon>Ascomycota</taxon>
        <taxon>Saccharomycotina</taxon>
        <taxon>Saccharomycetes</taxon>
        <taxon>Saccharomycetales</taxon>
        <taxon>Saccharomycetaceae</taxon>
        <taxon>Saccharomyces</taxon>
    </lineage>
</organism>
<sequence length="289" mass="31284">MSNESNDLEKNISHLDPTGVDNAYIPPEQPETKHSRFNIDRDTLRNHFIAAVGEFCGTFMFLWCAYVICNVANHDVALTTEPEGSHPGQLIMIALGFGFSVMFSIWCFAGVSGGALNPAVSLSLCLARAISPARCVVMWFPQIIAGMAAGGAASAMTPGKVLFTNALGLGCSRSRGLFLEMFGTAVLCLTVLMTAVEKRETNFMAALPIGISLFMAHMALTGYTGTGVNPARSLGAAVAARYFPHYHWIYWIGPLLGAFLAWSVWQLLQILDYTTYVNAEKAAGQKKED</sequence>
<comment type="function">
    <text evidence="4 5 6 7">Water channel required to facilitate the transport of water across membranes. Involved in freeze tolerance, osmotolerance and cell flocculation in liquid cultures. Is non-functional in most laboratory strains.</text>
</comment>
<comment type="subcellular location">
    <subcellularLocation>
        <location evidence="5">Endoplasmic reticulum membrane</location>
        <topology evidence="5">Multi-pass membrane protein</topology>
    </subcellularLocation>
    <subcellularLocation>
        <location evidence="5">Cell membrane</location>
        <topology evidence="5">Multi-pass membrane protein</topology>
    </subcellularLocation>
</comment>
<comment type="induction">
    <text evidence="5">During exponential phase in rich medium and repressed in minimum medium, hyper-osmolar medium or in sporulating conditions.</text>
</comment>
<comment type="domain">
    <text>Aquaporins contain two tandem repeats each containing three membrane-spanning domains and a pore-forming loop with the signature motif Asn-Pro-Ala (NPA).</text>
</comment>
<comment type="polymorphism">
    <text>In many laboratory strains, a natural 11 bp deletion in position 109 leads to a frameshift, which disrupts the gene coding for this protein and produces two ORFs.</text>
</comment>
<comment type="similarity">
    <text evidence="8">Belongs to the MIP/aquaporin (TC 1.A.8) family.</text>
</comment>
<protein>
    <recommendedName>
        <fullName>Aquaporin-2</fullName>
    </recommendedName>
</protein>